<gene>
    <name evidence="1" type="primary">hisB</name>
    <name type="ordered locus">Franean1_1918</name>
</gene>
<sequence length="195" mass="21012">MARTARVERKTKESHVLIELDLDGTGLASAETGVPFFDHMMEQLGKHGGFDLTVRTEGDLHIDAHHTVEDTAIAFGTALREALGDKAGIRRFGDATVPLDEALVQSAVDLSGRPYCVHVEPELVGLIGTYDTTLTRHIFESITASARIALHVRVLSGRNAHHVVEAQFKSVARAMRDAVALDARVAGVPSTKGVL</sequence>
<comment type="catalytic activity">
    <reaction evidence="1">
        <text>D-erythro-1-(imidazol-4-yl)glycerol 3-phosphate = 3-(imidazol-4-yl)-2-oxopropyl phosphate + H2O</text>
        <dbReference type="Rhea" id="RHEA:11040"/>
        <dbReference type="ChEBI" id="CHEBI:15377"/>
        <dbReference type="ChEBI" id="CHEBI:57766"/>
        <dbReference type="ChEBI" id="CHEBI:58278"/>
        <dbReference type="EC" id="4.2.1.19"/>
    </reaction>
</comment>
<comment type="pathway">
    <text evidence="1">Amino-acid biosynthesis; L-histidine biosynthesis; L-histidine from 5-phospho-alpha-D-ribose 1-diphosphate: step 6/9.</text>
</comment>
<comment type="subcellular location">
    <subcellularLocation>
        <location evidence="1">Cytoplasm</location>
    </subcellularLocation>
</comment>
<comment type="similarity">
    <text evidence="1">Belongs to the imidazoleglycerol-phosphate dehydratase family.</text>
</comment>
<dbReference type="EC" id="4.2.1.19" evidence="1"/>
<dbReference type="EMBL" id="CP000820">
    <property type="protein sequence ID" value="ABW11355.1"/>
    <property type="molecule type" value="Genomic_DNA"/>
</dbReference>
<dbReference type="RefSeq" id="WP_020459523.1">
    <property type="nucleotide sequence ID" value="NC_009921.1"/>
</dbReference>
<dbReference type="SMR" id="A8LGQ5"/>
<dbReference type="STRING" id="298653.Franean1_1918"/>
<dbReference type="KEGG" id="fre:Franean1_1918"/>
<dbReference type="eggNOG" id="COG0131">
    <property type="taxonomic scope" value="Bacteria"/>
</dbReference>
<dbReference type="HOGENOM" id="CLU_044308_2_0_11"/>
<dbReference type="UniPathway" id="UPA00031">
    <property type="reaction ID" value="UER00011"/>
</dbReference>
<dbReference type="GO" id="GO:0005737">
    <property type="term" value="C:cytoplasm"/>
    <property type="evidence" value="ECO:0007669"/>
    <property type="project" value="UniProtKB-SubCell"/>
</dbReference>
<dbReference type="GO" id="GO:0004424">
    <property type="term" value="F:imidazoleglycerol-phosphate dehydratase activity"/>
    <property type="evidence" value="ECO:0007669"/>
    <property type="project" value="UniProtKB-UniRule"/>
</dbReference>
<dbReference type="GO" id="GO:0000105">
    <property type="term" value="P:L-histidine biosynthetic process"/>
    <property type="evidence" value="ECO:0007669"/>
    <property type="project" value="UniProtKB-UniRule"/>
</dbReference>
<dbReference type="CDD" id="cd07914">
    <property type="entry name" value="IGPD"/>
    <property type="match status" value="1"/>
</dbReference>
<dbReference type="FunFam" id="3.30.230.40:FF:000001">
    <property type="entry name" value="Imidazoleglycerol-phosphate dehydratase HisB"/>
    <property type="match status" value="1"/>
</dbReference>
<dbReference type="FunFam" id="3.30.230.40:FF:000003">
    <property type="entry name" value="Imidazoleglycerol-phosphate dehydratase HisB"/>
    <property type="match status" value="1"/>
</dbReference>
<dbReference type="Gene3D" id="3.30.230.40">
    <property type="entry name" value="Imidazole glycerol phosphate dehydratase, domain 1"/>
    <property type="match status" value="2"/>
</dbReference>
<dbReference type="HAMAP" id="MF_00076">
    <property type="entry name" value="HisB"/>
    <property type="match status" value="1"/>
</dbReference>
<dbReference type="InterPro" id="IPR038494">
    <property type="entry name" value="IGPD_sf"/>
</dbReference>
<dbReference type="InterPro" id="IPR000807">
    <property type="entry name" value="ImidazoleglycerolP_deHydtase"/>
</dbReference>
<dbReference type="InterPro" id="IPR020565">
    <property type="entry name" value="ImidazoleglycerP_deHydtase_CS"/>
</dbReference>
<dbReference type="InterPro" id="IPR020568">
    <property type="entry name" value="Ribosomal_Su5_D2-typ_SF"/>
</dbReference>
<dbReference type="NCBIfam" id="NF002110">
    <property type="entry name" value="PRK00951.1-6"/>
    <property type="match status" value="1"/>
</dbReference>
<dbReference type="NCBIfam" id="NF002111">
    <property type="entry name" value="PRK00951.2-1"/>
    <property type="match status" value="1"/>
</dbReference>
<dbReference type="NCBIfam" id="NF002114">
    <property type="entry name" value="PRK00951.2-4"/>
    <property type="match status" value="1"/>
</dbReference>
<dbReference type="PANTHER" id="PTHR23133:SF2">
    <property type="entry name" value="IMIDAZOLEGLYCEROL-PHOSPHATE DEHYDRATASE"/>
    <property type="match status" value="1"/>
</dbReference>
<dbReference type="PANTHER" id="PTHR23133">
    <property type="entry name" value="IMIDAZOLEGLYCEROL-PHOSPHATE DEHYDRATASE HIS7"/>
    <property type="match status" value="1"/>
</dbReference>
<dbReference type="Pfam" id="PF00475">
    <property type="entry name" value="IGPD"/>
    <property type="match status" value="1"/>
</dbReference>
<dbReference type="SUPFAM" id="SSF54211">
    <property type="entry name" value="Ribosomal protein S5 domain 2-like"/>
    <property type="match status" value="2"/>
</dbReference>
<dbReference type="PROSITE" id="PS00954">
    <property type="entry name" value="IGP_DEHYDRATASE_1"/>
    <property type="match status" value="1"/>
</dbReference>
<dbReference type="PROSITE" id="PS00955">
    <property type="entry name" value="IGP_DEHYDRATASE_2"/>
    <property type="match status" value="1"/>
</dbReference>
<reference key="1">
    <citation type="journal article" date="2007" name="Genome Res.">
        <title>Genome characteristics of facultatively symbiotic Frankia sp. strains reflect host range and host plant biogeography.</title>
        <authorList>
            <person name="Normand P."/>
            <person name="Lapierre P."/>
            <person name="Tisa L.S."/>
            <person name="Gogarten J.P."/>
            <person name="Alloisio N."/>
            <person name="Bagnarol E."/>
            <person name="Bassi C.A."/>
            <person name="Berry A.M."/>
            <person name="Bickhart D.M."/>
            <person name="Choisne N."/>
            <person name="Couloux A."/>
            <person name="Cournoyer B."/>
            <person name="Cruveiller S."/>
            <person name="Daubin V."/>
            <person name="Demange N."/>
            <person name="Francino M.P."/>
            <person name="Goltsman E."/>
            <person name="Huang Y."/>
            <person name="Kopp O.R."/>
            <person name="Labarre L."/>
            <person name="Lapidus A."/>
            <person name="Lavire C."/>
            <person name="Marechal J."/>
            <person name="Martinez M."/>
            <person name="Mastronunzio J.E."/>
            <person name="Mullin B.C."/>
            <person name="Niemann J."/>
            <person name="Pujic P."/>
            <person name="Rawnsley T."/>
            <person name="Rouy Z."/>
            <person name="Schenowitz C."/>
            <person name="Sellstedt A."/>
            <person name="Tavares F."/>
            <person name="Tomkins J.P."/>
            <person name="Vallenet D."/>
            <person name="Valverde C."/>
            <person name="Wall L.G."/>
            <person name="Wang Y."/>
            <person name="Medigue C."/>
            <person name="Benson D.R."/>
        </authorList>
    </citation>
    <scope>NUCLEOTIDE SEQUENCE [LARGE SCALE GENOMIC DNA]</scope>
    <source>
        <strain>EAN1pec</strain>
    </source>
</reference>
<accession>A8LGQ5</accession>
<keyword id="KW-0028">Amino-acid biosynthesis</keyword>
<keyword id="KW-0963">Cytoplasm</keyword>
<keyword id="KW-0368">Histidine biosynthesis</keyword>
<keyword id="KW-0456">Lyase</keyword>
<organism>
    <name type="scientific">Parafrankia sp. (strain EAN1pec)</name>
    <dbReference type="NCBI Taxonomy" id="298653"/>
    <lineage>
        <taxon>Bacteria</taxon>
        <taxon>Bacillati</taxon>
        <taxon>Actinomycetota</taxon>
        <taxon>Actinomycetes</taxon>
        <taxon>Frankiales</taxon>
        <taxon>Frankiaceae</taxon>
        <taxon>Parafrankia</taxon>
    </lineage>
</organism>
<evidence type="ECO:0000255" key="1">
    <source>
        <dbReference type="HAMAP-Rule" id="MF_00076"/>
    </source>
</evidence>
<feature type="chain" id="PRO_1000092690" description="Imidazoleglycerol-phosphate dehydratase">
    <location>
        <begin position="1"/>
        <end position="195"/>
    </location>
</feature>
<protein>
    <recommendedName>
        <fullName evidence="1">Imidazoleglycerol-phosphate dehydratase</fullName>
        <shortName evidence="1">IGPD</shortName>
        <ecNumber evidence="1">4.2.1.19</ecNumber>
    </recommendedName>
</protein>
<name>HIS7_PARS2</name>
<proteinExistence type="inferred from homology"/>